<reference key="1">
    <citation type="journal article" date="2002" name="Nucleic Acids Res.">
        <title>Genome sequence of Shigella flexneri 2a: insights into pathogenicity through comparison with genomes of Escherichia coli K12 and O157.</title>
        <authorList>
            <person name="Jin Q."/>
            <person name="Yuan Z."/>
            <person name="Xu J."/>
            <person name="Wang Y."/>
            <person name="Shen Y."/>
            <person name="Lu W."/>
            <person name="Wang J."/>
            <person name="Liu H."/>
            <person name="Yang J."/>
            <person name="Yang F."/>
            <person name="Zhang X."/>
            <person name="Zhang J."/>
            <person name="Yang G."/>
            <person name="Wu H."/>
            <person name="Qu D."/>
            <person name="Dong J."/>
            <person name="Sun L."/>
            <person name="Xue Y."/>
            <person name="Zhao A."/>
            <person name="Gao Y."/>
            <person name="Zhu J."/>
            <person name="Kan B."/>
            <person name="Ding K."/>
            <person name="Chen S."/>
            <person name="Cheng H."/>
            <person name="Yao Z."/>
            <person name="He B."/>
            <person name="Chen R."/>
            <person name="Ma D."/>
            <person name="Qiang B."/>
            <person name="Wen Y."/>
            <person name="Hou Y."/>
            <person name="Yu J."/>
        </authorList>
    </citation>
    <scope>NUCLEOTIDE SEQUENCE [LARGE SCALE GENOMIC DNA]</scope>
    <source>
        <strain>301 / Serotype 2a</strain>
    </source>
</reference>
<reference key="2">
    <citation type="journal article" date="2003" name="Infect. Immun.">
        <title>Complete genome sequence and comparative genomics of Shigella flexneri serotype 2a strain 2457T.</title>
        <authorList>
            <person name="Wei J."/>
            <person name="Goldberg M.B."/>
            <person name="Burland V."/>
            <person name="Venkatesan M.M."/>
            <person name="Deng W."/>
            <person name="Fournier G."/>
            <person name="Mayhew G.F."/>
            <person name="Plunkett G. III"/>
            <person name="Rose D.J."/>
            <person name="Darling A."/>
            <person name="Mau B."/>
            <person name="Perna N.T."/>
            <person name="Payne S.M."/>
            <person name="Runyen-Janecky L.J."/>
            <person name="Zhou S."/>
            <person name="Schwartz D.C."/>
            <person name="Blattner F.R."/>
        </authorList>
    </citation>
    <scope>NUCLEOTIDE SEQUENCE [LARGE SCALE GENOMIC DNA]</scope>
    <source>
        <strain>ATCC 700930 / 2457T / Serotype 2a</strain>
    </source>
</reference>
<evidence type="ECO:0000256" key="1">
    <source>
        <dbReference type="SAM" id="MobiDB-lite"/>
    </source>
</evidence>
<accession>P64458</accession>
<accession>P76110</accession>
<keyword id="KW-1185">Reference proteome</keyword>
<dbReference type="EMBL" id="AE005674">
    <property type="protein sequence ID" value="AAN43342.1"/>
    <property type="molecule type" value="Genomic_DNA"/>
</dbReference>
<dbReference type="EMBL" id="AE014073">
    <property type="protein sequence ID" value="AAP17223.1"/>
    <property type="molecule type" value="Genomic_DNA"/>
</dbReference>
<dbReference type="RefSeq" id="NP_707635.1">
    <property type="nucleotide sequence ID" value="NC_004337.2"/>
</dbReference>
<dbReference type="RefSeq" id="WP_000018633.1">
    <property type="nucleotide sequence ID" value="NZ_WPGW01000271.1"/>
</dbReference>
<dbReference type="SMR" id="P64458"/>
<dbReference type="PaxDb" id="198214-SF1771"/>
<dbReference type="GeneID" id="1024926"/>
<dbReference type="GeneID" id="93775594"/>
<dbReference type="KEGG" id="sfl:SF1771"/>
<dbReference type="KEGG" id="sfx:S1903"/>
<dbReference type="PATRIC" id="fig|198214.7.peg.2098"/>
<dbReference type="HOGENOM" id="CLU_195139_0_0_6"/>
<dbReference type="Proteomes" id="UP000001006">
    <property type="component" value="Chromosome"/>
</dbReference>
<dbReference type="Proteomes" id="UP000002673">
    <property type="component" value="Chromosome"/>
</dbReference>
<dbReference type="InterPro" id="IPR019671">
    <property type="entry name" value="DUF2526"/>
</dbReference>
<dbReference type="Pfam" id="PF10735">
    <property type="entry name" value="DUF2526"/>
    <property type="match status" value="1"/>
</dbReference>
<sequence length="77" mass="8800">MSHLDEVIARVDAAIEESVIAHMNELLIALSDDAELSREDRYTQQQRLRTAIAHHGRKHKEDMEARHEQLTKGGTIL</sequence>
<proteinExistence type="predicted"/>
<feature type="chain" id="PRO_0000168938" description="Uncharacterized protein YdcY">
    <location>
        <begin position="1"/>
        <end position="77"/>
    </location>
</feature>
<feature type="region of interest" description="Disordered" evidence="1">
    <location>
        <begin position="54"/>
        <end position="77"/>
    </location>
</feature>
<feature type="compositionally biased region" description="Basic and acidic residues" evidence="1">
    <location>
        <begin position="59"/>
        <end position="70"/>
    </location>
</feature>
<gene>
    <name type="primary">ydcY</name>
    <name type="ordered locus">SF1771</name>
    <name type="ordered locus">S1903</name>
</gene>
<name>YDCY_SHIFL</name>
<protein>
    <recommendedName>
        <fullName>Uncharacterized protein YdcY</fullName>
    </recommendedName>
</protein>
<organism>
    <name type="scientific">Shigella flexneri</name>
    <dbReference type="NCBI Taxonomy" id="623"/>
    <lineage>
        <taxon>Bacteria</taxon>
        <taxon>Pseudomonadati</taxon>
        <taxon>Pseudomonadota</taxon>
        <taxon>Gammaproteobacteria</taxon>
        <taxon>Enterobacterales</taxon>
        <taxon>Enterobacteriaceae</taxon>
        <taxon>Shigella</taxon>
    </lineage>
</organism>